<gene>
    <name evidence="2" type="primary">folD</name>
    <name type="ordered locus">SBO_0414</name>
</gene>
<reference key="1">
    <citation type="journal article" date="2005" name="Nucleic Acids Res.">
        <title>Genome dynamics and diversity of Shigella species, the etiologic agents of bacillary dysentery.</title>
        <authorList>
            <person name="Yang F."/>
            <person name="Yang J."/>
            <person name="Zhang X."/>
            <person name="Chen L."/>
            <person name="Jiang Y."/>
            <person name="Yan Y."/>
            <person name="Tang X."/>
            <person name="Wang J."/>
            <person name="Xiong Z."/>
            <person name="Dong J."/>
            <person name="Xue Y."/>
            <person name="Zhu Y."/>
            <person name="Xu X."/>
            <person name="Sun L."/>
            <person name="Chen S."/>
            <person name="Nie H."/>
            <person name="Peng J."/>
            <person name="Xu J."/>
            <person name="Wang Y."/>
            <person name="Yuan Z."/>
            <person name="Wen Y."/>
            <person name="Yao Z."/>
            <person name="Shen Y."/>
            <person name="Qiang B."/>
            <person name="Hou Y."/>
            <person name="Yu J."/>
            <person name="Jin Q."/>
        </authorList>
    </citation>
    <scope>NUCLEOTIDE SEQUENCE [LARGE SCALE GENOMIC DNA]</scope>
    <source>
        <strain>Sb227</strain>
    </source>
</reference>
<organism>
    <name type="scientific">Shigella boydii serotype 4 (strain Sb227)</name>
    <dbReference type="NCBI Taxonomy" id="300268"/>
    <lineage>
        <taxon>Bacteria</taxon>
        <taxon>Pseudomonadati</taxon>
        <taxon>Pseudomonadota</taxon>
        <taxon>Gammaproteobacteria</taxon>
        <taxon>Enterobacterales</taxon>
        <taxon>Enterobacteriaceae</taxon>
        <taxon>Shigella</taxon>
    </lineage>
</organism>
<name>FOLD_SHIBS</name>
<proteinExistence type="inferred from homology"/>
<evidence type="ECO:0000250" key="1"/>
<evidence type="ECO:0000255" key="2">
    <source>
        <dbReference type="HAMAP-Rule" id="MF_01576"/>
    </source>
</evidence>
<dbReference type="EC" id="1.5.1.5" evidence="2"/>
<dbReference type="EC" id="3.5.4.9" evidence="2"/>
<dbReference type="EMBL" id="CP000036">
    <property type="protein sequence ID" value="ABB65122.1"/>
    <property type="molecule type" value="Genomic_DNA"/>
</dbReference>
<dbReference type="RefSeq" id="WP_000729155.1">
    <property type="nucleotide sequence ID" value="NC_007613.1"/>
</dbReference>
<dbReference type="SMR" id="Q324Y6"/>
<dbReference type="GeneID" id="93776949"/>
<dbReference type="KEGG" id="sbo:SBO_0414"/>
<dbReference type="HOGENOM" id="CLU_034045_2_1_6"/>
<dbReference type="UniPathway" id="UPA00193"/>
<dbReference type="Proteomes" id="UP000007067">
    <property type="component" value="Chromosome"/>
</dbReference>
<dbReference type="GO" id="GO:0005829">
    <property type="term" value="C:cytosol"/>
    <property type="evidence" value="ECO:0007669"/>
    <property type="project" value="TreeGrafter"/>
</dbReference>
<dbReference type="GO" id="GO:0004477">
    <property type="term" value="F:methenyltetrahydrofolate cyclohydrolase activity"/>
    <property type="evidence" value="ECO:0007669"/>
    <property type="project" value="UniProtKB-UniRule"/>
</dbReference>
<dbReference type="GO" id="GO:0004488">
    <property type="term" value="F:methylenetetrahydrofolate dehydrogenase (NADP+) activity"/>
    <property type="evidence" value="ECO:0007669"/>
    <property type="project" value="UniProtKB-UniRule"/>
</dbReference>
<dbReference type="GO" id="GO:0000105">
    <property type="term" value="P:L-histidine biosynthetic process"/>
    <property type="evidence" value="ECO:0007669"/>
    <property type="project" value="UniProtKB-KW"/>
</dbReference>
<dbReference type="GO" id="GO:0009086">
    <property type="term" value="P:methionine biosynthetic process"/>
    <property type="evidence" value="ECO:0007669"/>
    <property type="project" value="UniProtKB-KW"/>
</dbReference>
<dbReference type="GO" id="GO:0006164">
    <property type="term" value="P:purine nucleotide biosynthetic process"/>
    <property type="evidence" value="ECO:0007669"/>
    <property type="project" value="UniProtKB-KW"/>
</dbReference>
<dbReference type="GO" id="GO:0035999">
    <property type="term" value="P:tetrahydrofolate interconversion"/>
    <property type="evidence" value="ECO:0007669"/>
    <property type="project" value="UniProtKB-UniRule"/>
</dbReference>
<dbReference type="CDD" id="cd01080">
    <property type="entry name" value="NAD_bind_m-THF_DH_Cyclohyd"/>
    <property type="match status" value="1"/>
</dbReference>
<dbReference type="FunFam" id="3.40.50.10860:FF:000001">
    <property type="entry name" value="Bifunctional protein FolD"/>
    <property type="match status" value="1"/>
</dbReference>
<dbReference type="FunFam" id="3.40.50.720:FF:000006">
    <property type="entry name" value="Bifunctional protein FolD"/>
    <property type="match status" value="1"/>
</dbReference>
<dbReference type="Gene3D" id="3.40.50.10860">
    <property type="entry name" value="Leucine Dehydrogenase, chain A, domain 1"/>
    <property type="match status" value="1"/>
</dbReference>
<dbReference type="Gene3D" id="3.40.50.720">
    <property type="entry name" value="NAD(P)-binding Rossmann-like Domain"/>
    <property type="match status" value="1"/>
</dbReference>
<dbReference type="HAMAP" id="MF_01576">
    <property type="entry name" value="THF_DHG_CYH"/>
    <property type="match status" value="1"/>
</dbReference>
<dbReference type="InterPro" id="IPR046346">
    <property type="entry name" value="Aminoacid_DH-like_N_sf"/>
</dbReference>
<dbReference type="InterPro" id="IPR036291">
    <property type="entry name" value="NAD(P)-bd_dom_sf"/>
</dbReference>
<dbReference type="InterPro" id="IPR000672">
    <property type="entry name" value="THF_DH/CycHdrlase"/>
</dbReference>
<dbReference type="InterPro" id="IPR020630">
    <property type="entry name" value="THF_DH/CycHdrlase_cat_dom"/>
</dbReference>
<dbReference type="InterPro" id="IPR020867">
    <property type="entry name" value="THF_DH/CycHdrlase_CS"/>
</dbReference>
<dbReference type="InterPro" id="IPR020631">
    <property type="entry name" value="THF_DH/CycHdrlase_NAD-bd_dom"/>
</dbReference>
<dbReference type="NCBIfam" id="NF008058">
    <property type="entry name" value="PRK10792.1"/>
    <property type="match status" value="1"/>
</dbReference>
<dbReference type="NCBIfam" id="NF010783">
    <property type="entry name" value="PRK14186.1"/>
    <property type="match status" value="1"/>
</dbReference>
<dbReference type="PANTHER" id="PTHR48099:SF5">
    <property type="entry name" value="C-1-TETRAHYDROFOLATE SYNTHASE, CYTOPLASMIC"/>
    <property type="match status" value="1"/>
</dbReference>
<dbReference type="PANTHER" id="PTHR48099">
    <property type="entry name" value="C-1-TETRAHYDROFOLATE SYNTHASE, CYTOPLASMIC-RELATED"/>
    <property type="match status" value="1"/>
</dbReference>
<dbReference type="Pfam" id="PF00763">
    <property type="entry name" value="THF_DHG_CYH"/>
    <property type="match status" value="1"/>
</dbReference>
<dbReference type="Pfam" id="PF02882">
    <property type="entry name" value="THF_DHG_CYH_C"/>
    <property type="match status" value="1"/>
</dbReference>
<dbReference type="PRINTS" id="PR00085">
    <property type="entry name" value="THFDHDRGNASE"/>
</dbReference>
<dbReference type="SUPFAM" id="SSF53223">
    <property type="entry name" value="Aminoacid dehydrogenase-like, N-terminal domain"/>
    <property type="match status" value="1"/>
</dbReference>
<dbReference type="SUPFAM" id="SSF51735">
    <property type="entry name" value="NAD(P)-binding Rossmann-fold domains"/>
    <property type="match status" value="1"/>
</dbReference>
<dbReference type="PROSITE" id="PS00766">
    <property type="entry name" value="THF_DHG_CYH_1"/>
    <property type="match status" value="1"/>
</dbReference>
<dbReference type="PROSITE" id="PS00767">
    <property type="entry name" value="THF_DHG_CYH_2"/>
    <property type="match status" value="1"/>
</dbReference>
<comment type="function">
    <text evidence="2">Catalyzes the oxidation of 5,10-methylenetetrahydrofolate to 5,10-methenyltetrahydrofolate and then the hydrolysis of 5,10-methenyltetrahydrofolate to 10-formyltetrahydrofolate.</text>
</comment>
<comment type="catalytic activity">
    <reaction evidence="2">
        <text>(6R)-5,10-methylene-5,6,7,8-tetrahydrofolate + NADP(+) = (6R)-5,10-methenyltetrahydrofolate + NADPH</text>
        <dbReference type="Rhea" id="RHEA:22812"/>
        <dbReference type="ChEBI" id="CHEBI:15636"/>
        <dbReference type="ChEBI" id="CHEBI:57455"/>
        <dbReference type="ChEBI" id="CHEBI:57783"/>
        <dbReference type="ChEBI" id="CHEBI:58349"/>
        <dbReference type="EC" id="1.5.1.5"/>
    </reaction>
</comment>
<comment type="catalytic activity">
    <reaction evidence="2">
        <text>(6R)-5,10-methenyltetrahydrofolate + H2O = (6R)-10-formyltetrahydrofolate + H(+)</text>
        <dbReference type="Rhea" id="RHEA:23700"/>
        <dbReference type="ChEBI" id="CHEBI:15377"/>
        <dbReference type="ChEBI" id="CHEBI:15378"/>
        <dbReference type="ChEBI" id="CHEBI:57455"/>
        <dbReference type="ChEBI" id="CHEBI:195366"/>
        <dbReference type="EC" id="3.5.4.9"/>
    </reaction>
</comment>
<comment type="pathway">
    <text evidence="2">One-carbon metabolism; tetrahydrofolate interconversion.</text>
</comment>
<comment type="subunit">
    <text evidence="2">Homodimer.</text>
</comment>
<comment type="similarity">
    <text evidence="2">Belongs to the tetrahydrofolate dehydrogenase/cyclohydrolase family.</text>
</comment>
<protein>
    <recommendedName>
        <fullName evidence="2">Bifunctional protein FolD</fullName>
    </recommendedName>
    <domain>
        <recommendedName>
            <fullName evidence="2">Methylenetetrahydrofolate dehydrogenase</fullName>
            <ecNumber evidence="2">1.5.1.5</ecNumber>
        </recommendedName>
    </domain>
    <domain>
        <recommendedName>
            <fullName evidence="2">Methenyltetrahydrofolate cyclohydrolase</fullName>
            <ecNumber evidence="2">3.5.4.9</ecNumber>
        </recommendedName>
    </domain>
</protein>
<accession>Q324Y6</accession>
<keyword id="KW-0028">Amino-acid biosynthesis</keyword>
<keyword id="KW-0368">Histidine biosynthesis</keyword>
<keyword id="KW-0378">Hydrolase</keyword>
<keyword id="KW-0486">Methionine biosynthesis</keyword>
<keyword id="KW-0511">Multifunctional enzyme</keyword>
<keyword id="KW-0521">NADP</keyword>
<keyword id="KW-0554">One-carbon metabolism</keyword>
<keyword id="KW-0560">Oxidoreductase</keyword>
<keyword id="KW-0658">Purine biosynthesis</keyword>
<sequence length="288" mass="30956">MAAKIIDGKTIAQQVRSEVAQKVQARIAAGLRAPGLAVVLVGSNPASQIYVASKRKACEEVGFVSRSYDLPETTSEAELLELIDALNADNTIDGILVQLPLPAGIDNVKVLERIHPDKDVDGFHPYNVGRLCQRAPRLRPCTPRGIVTLLERYNIDTFGLNAVVIGASNIVGRPMSMELLLAGCTTTVTHRFTKNLRHHVENADLLIVAVGKPGFIPGDWIKEGAIVIDVGINRLENGKVVGDVVFEDAAKRASYITPVPGGVGPMTVATLIENTLQACVEYHDPQGE</sequence>
<feature type="initiator methionine" description="Removed" evidence="1">
    <location>
        <position position="1"/>
    </location>
</feature>
<feature type="chain" id="PRO_0000268497" description="Bifunctional protein FolD">
    <location>
        <begin position="2"/>
        <end position="288"/>
    </location>
</feature>
<feature type="binding site" evidence="2">
    <location>
        <begin position="166"/>
        <end position="168"/>
    </location>
    <ligand>
        <name>NADP(+)</name>
        <dbReference type="ChEBI" id="CHEBI:58349"/>
    </ligand>
</feature>
<feature type="binding site" evidence="2">
    <location>
        <position position="232"/>
    </location>
    <ligand>
        <name>NADP(+)</name>
        <dbReference type="ChEBI" id="CHEBI:58349"/>
    </ligand>
</feature>